<comment type="similarity">
    <text evidence="1">Belongs to the UPF0306 family.</text>
</comment>
<dbReference type="EMBL" id="CP001144">
    <property type="protein sequence ID" value="ACH73930.1"/>
    <property type="molecule type" value="Genomic_DNA"/>
</dbReference>
<dbReference type="RefSeq" id="WP_000380404.1">
    <property type="nucleotide sequence ID" value="NC_011205.1"/>
</dbReference>
<dbReference type="SMR" id="B5FHZ8"/>
<dbReference type="KEGG" id="sed:SeD_A3626"/>
<dbReference type="HOGENOM" id="CLU_105087_3_0_6"/>
<dbReference type="Proteomes" id="UP000008322">
    <property type="component" value="Chromosome"/>
</dbReference>
<dbReference type="Gene3D" id="2.30.110.10">
    <property type="entry name" value="Electron Transport, Fmn-binding Protein, Chain A"/>
    <property type="match status" value="1"/>
</dbReference>
<dbReference type="HAMAP" id="MF_00764">
    <property type="entry name" value="UPF0306"/>
    <property type="match status" value="1"/>
</dbReference>
<dbReference type="InterPro" id="IPR012349">
    <property type="entry name" value="Split_barrel_FMN-bd"/>
</dbReference>
<dbReference type="InterPro" id="IPR011194">
    <property type="entry name" value="UPF0306"/>
</dbReference>
<dbReference type="NCBIfam" id="NF002900">
    <property type="entry name" value="PRK03467.1"/>
    <property type="match status" value="1"/>
</dbReference>
<dbReference type="PIRSF" id="PIRSF009554">
    <property type="entry name" value="UCP009554"/>
    <property type="match status" value="1"/>
</dbReference>
<dbReference type="SUPFAM" id="SSF50475">
    <property type="entry name" value="FMN-binding split barrel"/>
    <property type="match status" value="1"/>
</dbReference>
<reference key="1">
    <citation type="journal article" date="2011" name="J. Bacteriol.">
        <title>Comparative genomics of 28 Salmonella enterica isolates: evidence for CRISPR-mediated adaptive sublineage evolution.</title>
        <authorList>
            <person name="Fricke W.F."/>
            <person name="Mammel M.K."/>
            <person name="McDermott P.F."/>
            <person name="Tartera C."/>
            <person name="White D.G."/>
            <person name="Leclerc J.E."/>
            <person name="Ravel J."/>
            <person name="Cebula T.A."/>
        </authorList>
    </citation>
    <scope>NUCLEOTIDE SEQUENCE [LARGE SCALE GENOMIC DNA]</scope>
    <source>
        <strain>CT_02021853</strain>
    </source>
</reference>
<evidence type="ECO:0000255" key="1">
    <source>
        <dbReference type="HAMAP-Rule" id="MF_00764"/>
    </source>
</evidence>
<proteinExistence type="inferred from homology"/>
<accession>B5FHZ8</accession>
<organism>
    <name type="scientific">Salmonella dublin (strain CT_02021853)</name>
    <dbReference type="NCBI Taxonomy" id="439851"/>
    <lineage>
        <taxon>Bacteria</taxon>
        <taxon>Pseudomonadati</taxon>
        <taxon>Pseudomonadota</taxon>
        <taxon>Gammaproteobacteria</taxon>
        <taxon>Enterobacterales</taxon>
        <taxon>Enterobacteriaceae</taxon>
        <taxon>Salmonella</taxon>
    </lineage>
</organism>
<feature type="chain" id="PRO_1000198362" description="UPF0306 protein YhbP">
    <location>
        <begin position="1"/>
        <end position="147"/>
    </location>
</feature>
<protein>
    <recommendedName>
        <fullName evidence="1">UPF0306 protein YhbP</fullName>
    </recommendedName>
</protein>
<name>YHBP_SALDC</name>
<gene>
    <name evidence="1" type="primary">yhbP</name>
    <name type="ordered locus">SeD_A3626</name>
</gene>
<sequence>MDTLTAIGRWLAKQHVVTWCVHHEGELWCANAFYLFDAQNVALYLLTDDKTRHAQMSGACAPVAGTVNGQPKTVARIRGVQFKGEIRRLEGQESDAARKAYLRRFPVARVLPAPVWEIRLDEIKFTDNTLGFGKKLHWLRDSRAQQA</sequence>